<evidence type="ECO:0000250" key="1">
    <source>
        <dbReference type="UniProtKB" id="P19267"/>
    </source>
</evidence>
<evidence type="ECO:0000305" key="2"/>
<gene>
    <name type="ordered locus">PH1701.1</name>
    <name type="ORF">PHS046</name>
</gene>
<feature type="chain" id="PRO_0000155001" description="Archaeal histone B">
    <location>
        <begin position="1"/>
        <end position="67"/>
    </location>
</feature>
<feature type="region of interest" description="Interaction with DNA" evidence="1">
    <location>
        <begin position="20"/>
        <end position="22"/>
    </location>
</feature>
<feature type="region of interest" description="Interaction with DNA" evidence="1">
    <location>
        <begin position="54"/>
        <end position="57"/>
    </location>
</feature>
<organism>
    <name type="scientific">Pyrococcus horikoshii (strain ATCC 700860 / DSM 12428 / JCM 9974 / NBRC 100139 / OT-3)</name>
    <dbReference type="NCBI Taxonomy" id="70601"/>
    <lineage>
        <taxon>Archaea</taxon>
        <taxon>Methanobacteriati</taxon>
        <taxon>Methanobacteriota</taxon>
        <taxon>Thermococci</taxon>
        <taxon>Thermococcales</taxon>
        <taxon>Thermococcaceae</taxon>
        <taxon>Pyrococcus</taxon>
    </lineage>
</organism>
<protein>
    <recommendedName>
        <fullName>Archaeal histone B</fullName>
    </recommendedName>
    <alternativeName>
        <fullName>Archaeal histone A2</fullName>
    </alternativeName>
</protein>
<keyword id="KW-0158">Chromosome</keyword>
<keyword id="KW-0963">Cytoplasm</keyword>
<keyword id="KW-0238">DNA-binding</keyword>
<proteinExistence type="inferred from homology"/>
<comment type="function">
    <text evidence="1">Binds and compact DNA (95 to 150 base pairs) to form nucleosome-like structures that contain positive DNA supercoils. Increases the resistance of DNA to thermal denaturation (By similarity).</text>
</comment>
<comment type="subunit">
    <text evidence="1">Homodimer or heterodimer with another histone. Dimers then assemble into higher oligomers, with the DNA wrapped around the protein core (By similarity).</text>
</comment>
<comment type="subcellular location">
    <subcellularLocation>
        <location evidence="2">Cytoplasm</location>
    </subcellularLocation>
    <subcellularLocation>
        <location evidence="2">Chromosome</location>
    </subcellularLocation>
</comment>
<comment type="similarity">
    <text evidence="2">Belongs to the archaeal histone HMF family.</text>
</comment>
<comment type="sequence caution" evidence="2">
    <conflict type="erroneous initiation">
        <sequence resource="EMBL-CDS" id="BAA30815"/>
    </conflict>
</comment>
<accession>O74092</accession>
<dbReference type="EMBL" id="BA000001">
    <property type="protein sequence ID" value="BAA30815.1"/>
    <property type="status" value="ALT_INIT"/>
    <property type="molecule type" value="Genomic_DNA"/>
</dbReference>
<dbReference type="PIR" id="H71177">
    <property type="entry name" value="H71177"/>
</dbReference>
<dbReference type="RefSeq" id="WP_048053461.1">
    <property type="nucleotide sequence ID" value="NC_000961.1"/>
</dbReference>
<dbReference type="SMR" id="O74092"/>
<dbReference type="STRING" id="70601.gene:9378697"/>
<dbReference type="EnsemblBacteria" id="BAA30815">
    <property type="protein sequence ID" value="BAA30815"/>
    <property type="gene ID" value="BAA30815"/>
</dbReference>
<dbReference type="GeneID" id="1442548"/>
<dbReference type="KEGG" id="pho:PHS046"/>
<dbReference type="eggNOG" id="arCOG02144">
    <property type="taxonomic scope" value="Archaea"/>
</dbReference>
<dbReference type="Proteomes" id="UP000000752">
    <property type="component" value="Chromosome"/>
</dbReference>
<dbReference type="GO" id="GO:0005694">
    <property type="term" value="C:chromosome"/>
    <property type="evidence" value="ECO:0007669"/>
    <property type="project" value="UniProtKB-SubCell"/>
</dbReference>
<dbReference type="GO" id="GO:0005737">
    <property type="term" value="C:cytoplasm"/>
    <property type="evidence" value="ECO:0007669"/>
    <property type="project" value="UniProtKB-SubCell"/>
</dbReference>
<dbReference type="GO" id="GO:0003677">
    <property type="term" value="F:DNA binding"/>
    <property type="evidence" value="ECO:0007669"/>
    <property type="project" value="UniProtKB-KW"/>
</dbReference>
<dbReference type="GO" id="GO:0046982">
    <property type="term" value="F:protein heterodimerization activity"/>
    <property type="evidence" value="ECO:0007669"/>
    <property type="project" value="InterPro"/>
</dbReference>
<dbReference type="CDD" id="cd22909">
    <property type="entry name" value="HFD_archaea_histone-like"/>
    <property type="match status" value="1"/>
</dbReference>
<dbReference type="Gene3D" id="1.10.20.10">
    <property type="entry name" value="Histone, subunit A"/>
    <property type="match status" value="1"/>
</dbReference>
<dbReference type="InterPro" id="IPR050947">
    <property type="entry name" value="Archaeal_histone_HMF"/>
</dbReference>
<dbReference type="InterPro" id="IPR003958">
    <property type="entry name" value="CBFA_NFYB_domain"/>
</dbReference>
<dbReference type="InterPro" id="IPR009072">
    <property type="entry name" value="Histone-fold"/>
</dbReference>
<dbReference type="InterPro" id="IPR050004">
    <property type="entry name" value="HmfB-like"/>
</dbReference>
<dbReference type="InterPro" id="IPR004823">
    <property type="entry name" value="TAF_TATA-bd_Histone-like_dom"/>
</dbReference>
<dbReference type="NCBIfam" id="NF043032">
    <property type="entry name" value="archaea_histone"/>
    <property type="match status" value="1"/>
</dbReference>
<dbReference type="PANTHER" id="PTHR47828">
    <property type="entry name" value="ARCHAEAL HISTONE A"/>
    <property type="match status" value="1"/>
</dbReference>
<dbReference type="PANTHER" id="PTHR47828:SF1">
    <property type="entry name" value="ARCHAEAL HISTONE A"/>
    <property type="match status" value="1"/>
</dbReference>
<dbReference type="Pfam" id="PF00808">
    <property type="entry name" value="CBFD_NFYB_HMF"/>
    <property type="match status" value="1"/>
</dbReference>
<dbReference type="SMART" id="SM00803">
    <property type="entry name" value="TAF"/>
    <property type="match status" value="1"/>
</dbReference>
<dbReference type="SUPFAM" id="SSF47113">
    <property type="entry name" value="Histone-fold"/>
    <property type="match status" value="1"/>
</dbReference>
<reference key="1">
    <citation type="journal article" date="1998" name="DNA Res.">
        <title>Complete sequence and gene organization of the genome of a hyper-thermophilic archaebacterium, Pyrococcus horikoshii OT3.</title>
        <authorList>
            <person name="Kawarabayasi Y."/>
            <person name="Sawada M."/>
            <person name="Horikawa H."/>
            <person name="Haikawa Y."/>
            <person name="Hino Y."/>
            <person name="Yamamoto S."/>
            <person name="Sekine M."/>
            <person name="Baba S."/>
            <person name="Kosugi H."/>
            <person name="Hosoyama A."/>
            <person name="Nagai Y."/>
            <person name="Sakai M."/>
            <person name="Ogura K."/>
            <person name="Otsuka R."/>
            <person name="Nakazawa H."/>
            <person name="Takamiya M."/>
            <person name="Ohfuku Y."/>
            <person name="Funahashi T."/>
            <person name="Tanaka T."/>
            <person name="Kudoh Y."/>
            <person name="Yamazaki J."/>
            <person name="Kushida N."/>
            <person name="Oguchi A."/>
            <person name="Aoki K."/>
            <person name="Yoshizawa T."/>
            <person name="Nakamura Y."/>
            <person name="Robb F.T."/>
            <person name="Horikoshi K."/>
            <person name="Masuchi Y."/>
            <person name="Shizuya H."/>
            <person name="Kikuchi H."/>
        </authorList>
    </citation>
    <scope>NUCLEOTIDE SEQUENCE [LARGE SCALE GENOMIC DNA]</scope>
    <source>
        <strain>ATCC 700860 / DSM 12428 / JCM 9974 / NBRC 100139 / OT-3</strain>
    </source>
</reference>
<sequence length="67" mass="7366">MAELPIAPVDRLIRKAGAQRVSEKAAKLLAEHLEEKALEIARKAVDLAKHAGRKTVKVEDIKLAIRS</sequence>
<name>HARB_PYRHO</name>